<name>ATG17_PICAN</name>
<proteinExistence type="inferred from homology"/>
<accession>A7KAK1</accession>
<sequence>MAIPIAQWVADARANLAHAEQVCNDANMYLTSTSEKLRRREMKVPKLIYYLDALKQQLRLLEIIRDSLVLNLNGVMEKRAALQSQLLKDVDRLHQTIDTLKNTVVVFDGQTTLYEYISESGVEELFNGVSQNLKDIQTLIKGNRTDALLIRLTSDLDHLSNELNALDSKFRDMRLVDTQSSSIDPISKLLEINAELEHDMVAILTSFNNHYDQCEKGEAILKDPAVPQDEKDELVSVLQNDVEELPEAQRSLTSNAEIIKKNCKEVMKILDIFEDYFQRVETYVCELQEYGESKLRVQLKEFSDINTEVSRKLEIAQTHQDELVQYNSDFQQFVRSYYSLILELDRRMRVNEHISSAIDNFRSTISNIVEKDHEKRMEFLQKHGDFIPQNLVDSSVINSGTPQISINFDQEPLPAISKEVVQLAKKMQK</sequence>
<feature type="chain" id="PRO_0000317986" description="Autophagy-related protein 17">
    <location>
        <begin position="1"/>
        <end position="429"/>
    </location>
</feature>
<feature type="coiled-coil region" evidence="2">
    <location>
        <begin position="146"/>
        <end position="175"/>
    </location>
</feature>
<dbReference type="EMBL" id="EF107723">
    <property type="protein sequence ID" value="ABO31061.1"/>
    <property type="molecule type" value="Genomic_DNA"/>
</dbReference>
<dbReference type="SMR" id="A7KAK1"/>
<dbReference type="GO" id="GO:1990316">
    <property type="term" value="C:Atg1/ULK1 kinase complex"/>
    <property type="evidence" value="ECO:0007669"/>
    <property type="project" value="TreeGrafter"/>
</dbReference>
<dbReference type="GO" id="GO:0034045">
    <property type="term" value="C:phagophore assembly site membrane"/>
    <property type="evidence" value="ECO:0007669"/>
    <property type="project" value="UniProtKB-SubCell"/>
</dbReference>
<dbReference type="GO" id="GO:0060090">
    <property type="term" value="F:molecular adaptor activity"/>
    <property type="evidence" value="ECO:0007669"/>
    <property type="project" value="TreeGrafter"/>
</dbReference>
<dbReference type="GO" id="GO:0030295">
    <property type="term" value="F:protein kinase activator activity"/>
    <property type="evidence" value="ECO:0007669"/>
    <property type="project" value="TreeGrafter"/>
</dbReference>
<dbReference type="GO" id="GO:0000045">
    <property type="term" value="P:autophagosome assembly"/>
    <property type="evidence" value="ECO:0007669"/>
    <property type="project" value="TreeGrafter"/>
</dbReference>
<dbReference type="GO" id="GO:0000422">
    <property type="term" value="P:autophagy of mitochondrion"/>
    <property type="evidence" value="ECO:0007669"/>
    <property type="project" value="TreeGrafter"/>
</dbReference>
<dbReference type="GO" id="GO:0034727">
    <property type="term" value="P:piecemeal microautophagy of the nucleus"/>
    <property type="evidence" value="ECO:0007669"/>
    <property type="project" value="TreeGrafter"/>
</dbReference>
<dbReference type="InterPro" id="IPR007240">
    <property type="entry name" value="Atg17"/>
</dbReference>
<dbReference type="InterPro" id="IPR045326">
    <property type="entry name" value="ATG17-like_dom"/>
</dbReference>
<dbReference type="PANTHER" id="PTHR28005">
    <property type="entry name" value="AUTOPHAGY-RELATED PROTEIN 17"/>
    <property type="match status" value="1"/>
</dbReference>
<dbReference type="PANTHER" id="PTHR28005:SF1">
    <property type="entry name" value="AUTOPHAGY-RELATED PROTEIN 17"/>
    <property type="match status" value="1"/>
</dbReference>
<dbReference type="Pfam" id="PF04108">
    <property type="entry name" value="ATG17_like"/>
    <property type="match status" value="1"/>
</dbReference>
<organism>
    <name type="scientific">Pichia angusta</name>
    <name type="common">Yeast</name>
    <name type="synonym">Hansenula polymorpha</name>
    <dbReference type="NCBI Taxonomy" id="870730"/>
    <lineage>
        <taxon>Eukaryota</taxon>
        <taxon>Fungi</taxon>
        <taxon>Dikarya</taxon>
        <taxon>Ascomycota</taxon>
        <taxon>Saccharomycotina</taxon>
        <taxon>Pichiomycetes</taxon>
        <taxon>Pichiales</taxon>
        <taxon>Pichiaceae</taxon>
        <taxon>Ogataea</taxon>
    </lineage>
</organism>
<protein>
    <recommendedName>
        <fullName>Autophagy-related protein 17</fullName>
    </recommendedName>
</protein>
<evidence type="ECO:0000250" key="1"/>
<evidence type="ECO:0000255" key="2"/>
<evidence type="ECO:0000269" key="3">
    <source>
    </source>
</evidence>
<evidence type="ECO:0000305" key="4"/>
<reference key="1">
    <citation type="journal article" date="2007" name="Autophagy">
        <title>ATG genes involved in non-selective autophagy are conserved from yeast to man, but the selective Cvt and pexophagy pathways also require organism-specific genes.</title>
        <authorList>
            <person name="Meijer W.H."/>
            <person name="van der Klei I.J."/>
            <person name="Veenhuis M."/>
            <person name="Kiel J.A.K.W."/>
        </authorList>
    </citation>
    <scope>NUCLEOTIDE SEQUENCE [GENOMIC DNA]</scope>
    <scope>FUNCTION</scope>
    <source>
        <strain>ATCC 34438 / CBS 4732 / DSM 70277 / JCM 3621 / NBRC 1476 / NRRL Y-5445</strain>
    </source>
</reference>
<comment type="function">
    <text evidence="1 3">Autophagy-specific protein that functions in response to autophagy-inducing signals as a scaffold to recruit other ATG proteins to organize pre-autophagosomal structure (PAS) formation. Modulates the timing and magnitude of the autophagy response, such as the size of the sequestering vesicles. Plays particularly a role in pexophagy and nucleophagy (By similarity).</text>
</comment>
<comment type="subcellular location">
    <subcellularLocation>
        <location evidence="1">Cytoplasm</location>
    </subcellularLocation>
    <subcellularLocation>
        <location evidence="1">Preautophagosomal structure membrane</location>
        <topology evidence="1">Peripheral membrane protein</topology>
    </subcellularLocation>
</comment>
<comment type="similarity">
    <text evidence="4">Belongs to the ATG17 family.</text>
</comment>
<gene>
    <name type="primary">ATG17</name>
</gene>
<keyword id="KW-0072">Autophagy</keyword>
<keyword id="KW-0175">Coiled coil</keyword>
<keyword id="KW-0963">Cytoplasm</keyword>
<keyword id="KW-0472">Membrane</keyword>